<sequence length="8" mass="1010">ADKNFLRF</sequence>
<proteinExistence type="evidence at protein level"/>
<protein>
    <recommendedName>
        <fullName>FMRFamide-like neuropeptide FLP2</fullName>
    </recommendedName>
    <alternativeName>
        <fullName>ADKNFLRF-amide</fullName>
    </alternativeName>
</protein>
<evidence type="ECO:0000269" key="1">
    <source ref="1"/>
</evidence>
<evidence type="ECO:0000305" key="2"/>
<comment type="subcellular location">
    <subcellularLocation>
        <location>Secreted</location>
    </subcellularLocation>
</comment>
<comment type="mass spectrometry" mass="1009.4" method="MALDI" evidence="1"/>
<comment type="similarity">
    <text evidence="2">Belongs to the FARP (FMRFamide related peptide) family.</text>
</comment>
<name>FAR2_MACRS</name>
<feature type="peptide" id="PRO_0000043685" description="FMRFamide-like neuropeptide FLP2">
    <location>
        <begin position="1"/>
        <end position="8"/>
    </location>
</feature>
<feature type="modified residue" description="Phenylalanine amide" evidence="1">
    <location>
        <position position="8"/>
    </location>
</feature>
<accession>P83275</accession>
<organism evidence="2">
    <name type="scientific">Macrobrachium rosenbergii</name>
    <name type="common">Giant fresh water prawn</name>
    <dbReference type="NCBI Taxonomy" id="79674"/>
    <lineage>
        <taxon>Eukaryota</taxon>
        <taxon>Metazoa</taxon>
        <taxon>Ecdysozoa</taxon>
        <taxon>Arthropoda</taxon>
        <taxon>Crustacea</taxon>
        <taxon>Multicrustacea</taxon>
        <taxon>Malacostraca</taxon>
        <taxon>Eumalacostraca</taxon>
        <taxon>Eucarida</taxon>
        <taxon>Decapoda</taxon>
        <taxon>Pleocyemata</taxon>
        <taxon>Caridea</taxon>
        <taxon>Palaemonoidea</taxon>
        <taxon>Palaemonidae</taxon>
        <taxon>Macrobrachium</taxon>
    </lineage>
</organism>
<dbReference type="GO" id="GO:0005576">
    <property type="term" value="C:extracellular region"/>
    <property type="evidence" value="ECO:0007669"/>
    <property type="project" value="UniProtKB-SubCell"/>
</dbReference>
<dbReference type="GO" id="GO:0007218">
    <property type="term" value="P:neuropeptide signaling pathway"/>
    <property type="evidence" value="ECO:0000304"/>
    <property type="project" value="UniProtKB"/>
</dbReference>
<reference evidence="2" key="1">
    <citation type="journal article" date="1998" name="Comp. Biochem. Physiol.">
        <title>Novel FMRFamide-like neuropeptides from the eyestalk of the giant freshwater prawn Macrobrachium rosenbergii.</title>
        <authorList>
            <person name="Sithigorngul P."/>
            <person name="Saraithongkum W."/>
            <person name="Jaideechoey S."/>
            <person name="Longyant S."/>
            <person name="Sithigorngul W."/>
        </authorList>
    </citation>
    <scope>PROTEIN SEQUENCE</scope>
    <scope>AMIDATION AT PHE-8</scope>
    <scope>MASS SPECTROMETRY</scope>
    <source>
        <tissue>Eyestalk</tissue>
    </source>
</reference>
<keyword id="KW-0027">Amidation</keyword>
<keyword id="KW-0903">Direct protein sequencing</keyword>
<keyword id="KW-0527">Neuropeptide</keyword>
<keyword id="KW-0964">Secreted</keyword>